<reference key="1">
    <citation type="journal article" date="2004" name="Genome Res.">
        <title>Genome sequence of Haloarcula marismortui: a halophilic archaeon from the Dead Sea.</title>
        <authorList>
            <person name="Baliga N.S."/>
            <person name="Bonneau R."/>
            <person name="Facciotti M.T."/>
            <person name="Pan M."/>
            <person name="Glusman G."/>
            <person name="Deutsch E.W."/>
            <person name="Shannon P."/>
            <person name="Chiu Y."/>
            <person name="Weng R.S."/>
            <person name="Gan R.R."/>
            <person name="Hung P."/>
            <person name="Date S.V."/>
            <person name="Marcotte E."/>
            <person name="Hood L."/>
            <person name="Ng W.V."/>
        </authorList>
    </citation>
    <scope>NUCLEOTIDE SEQUENCE [LARGE SCALE GENOMIC DNA]</scope>
    <source>
        <strain>ATCC 43049 / DSM 3752 / JCM 8966 / VKM B-1809</strain>
    </source>
</reference>
<gene>
    <name evidence="1" type="primary">mat</name>
    <name type="ordered locus">rrnAC1233</name>
</gene>
<keyword id="KW-0067">ATP-binding</keyword>
<keyword id="KW-0460">Magnesium</keyword>
<keyword id="KW-0547">Nucleotide-binding</keyword>
<keyword id="KW-0554">One-carbon metabolism</keyword>
<keyword id="KW-1185">Reference proteome</keyword>
<keyword id="KW-0808">Transferase</keyword>
<evidence type="ECO:0000255" key="1">
    <source>
        <dbReference type="HAMAP-Rule" id="MF_00136"/>
    </source>
</evidence>
<dbReference type="EC" id="2.5.1.6" evidence="1"/>
<dbReference type="EMBL" id="AY596297">
    <property type="protein sequence ID" value="AAV46177.1"/>
    <property type="molecule type" value="Genomic_DNA"/>
</dbReference>
<dbReference type="RefSeq" id="WP_011223512.1">
    <property type="nucleotide sequence ID" value="NC_006396.1"/>
</dbReference>
<dbReference type="SMR" id="Q5V2S5"/>
<dbReference type="STRING" id="272569.rrnAC1233"/>
<dbReference type="PaxDb" id="272569-rrnAC1233"/>
<dbReference type="EnsemblBacteria" id="AAV46177">
    <property type="protein sequence ID" value="AAV46177"/>
    <property type="gene ID" value="rrnAC1233"/>
</dbReference>
<dbReference type="GeneID" id="40152222"/>
<dbReference type="KEGG" id="hma:rrnAC1233"/>
<dbReference type="PATRIC" id="fig|272569.17.peg.1944"/>
<dbReference type="eggNOG" id="arCOG01678">
    <property type="taxonomic scope" value="Archaea"/>
</dbReference>
<dbReference type="HOGENOM" id="CLU_057642_0_0_2"/>
<dbReference type="UniPathway" id="UPA00315">
    <property type="reaction ID" value="UER00080"/>
</dbReference>
<dbReference type="Proteomes" id="UP000001169">
    <property type="component" value="Chromosome I"/>
</dbReference>
<dbReference type="GO" id="GO:0005524">
    <property type="term" value="F:ATP binding"/>
    <property type="evidence" value="ECO:0007669"/>
    <property type="project" value="UniProtKB-UniRule"/>
</dbReference>
<dbReference type="GO" id="GO:0000287">
    <property type="term" value="F:magnesium ion binding"/>
    <property type="evidence" value="ECO:0007669"/>
    <property type="project" value="UniProtKB-UniRule"/>
</dbReference>
<dbReference type="GO" id="GO:0004478">
    <property type="term" value="F:methionine adenosyltransferase activity"/>
    <property type="evidence" value="ECO:0007669"/>
    <property type="project" value="UniProtKB-UniRule"/>
</dbReference>
<dbReference type="GO" id="GO:0006730">
    <property type="term" value="P:one-carbon metabolic process"/>
    <property type="evidence" value="ECO:0007669"/>
    <property type="project" value="UniProtKB-KW"/>
</dbReference>
<dbReference type="GO" id="GO:0006556">
    <property type="term" value="P:S-adenosylmethionine biosynthetic process"/>
    <property type="evidence" value="ECO:0007669"/>
    <property type="project" value="UniProtKB-UniRule"/>
</dbReference>
<dbReference type="Gene3D" id="3.30.300.10">
    <property type="match status" value="1"/>
</dbReference>
<dbReference type="Gene3D" id="3.30.300.280">
    <property type="entry name" value="S-adenosylmethionine synthetase, C-terminal domain"/>
    <property type="match status" value="1"/>
</dbReference>
<dbReference type="HAMAP" id="MF_00136">
    <property type="entry name" value="S_AdoMet_synth2"/>
    <property type="match status" value="1"/>
</dbReference>
<dbReference type="InterPro" id="IPR027790">
    <property type="entry name" value="AdoMet_synthase_2_family"/>
</dbReference>
<dbReference type="InterPro" id="IPR042544">
    <property type="entry name" value="AdoMet_synthase_3"/>
</dbReference>
<dbReference type="InterPro" id="IPR002795">
    <property type="entry name" value="S-AdoMet_synthetase_arc"/>
</dbReference>
<dbReference type="NCBIfam" id="NF003364">
    <property type="entry name" value="PRK04439.1-3"/>
    <property type="match status" value="1"/>
</dbReference>
<dbReference type="NCBIfam" id="NF003366">
    <property type="entry name" value="PRK04439.1-5"/>
    <property type="match status" value="1"/>
</dbReference>
<dbReference type="PANTHER" id="PTHR36697">
    <property type="entry name" value="S-ADENOSYLMETHIONINE SYNTHASE"/>
    <property type="match status" value="1"/>
</dbReference>
<dbReference type="PANTHER" id="PTHR36697:SF1">
    <property type="entry name" value="S-ADENOSYLMETHIONINE SYNTHASE"/>
    <property type="match status" value="1"/>
</dbReference>
<dbReference type="Pfam" id="PF01941">
    <property type="entry name" value="AdoMet_Synthase"/>
    <property type="match status" value="1"/>
</dbReference>
<proteinExistence type="inferred from homology"/>
<protein>
    <recommendedName>
        <fullName evidence="1">S-adenosylmethionine synthase</fullName>
        <shortName evidence="1">AdoMet synthase</shortName>
        <ecNumber evidence="1">2.5.1.6</ecNumber>
    </recommendedName>
    <alternativeName>
        <fullName evidence="1">Methionine adenosyltransferase</fullName>
    </alternativeName>
</protein>
<comment type="function">
    <text evidence="1">Catalyzes the formation of S-adenosylmethionine from methionine and ATP.</text>
</comment>
<comment type="catalytic activity">
    <reaction evidence="1">
        <text>L-methionine + ATP + H2O = S-adenosyl-L-methionine + phosphate + diphosphate</text>
        <dbReference type="Rhea" id="RHEA:21080"/>
        <dbReference type="ChEBI" id="CHEBI:15377"/>
        <dbReference type="ChEBI" id="CHEBI:30616"/>
        <dbReference type="ChEBI" id="CHEBI:33019"/>
        <dbReference type="ChEBI" id="CHEBI:43474"/>
        <dbReference type="ChEBI" id="CHEBI:57844"/>
        <dbReference type="ChEBI" id="CHEBI:59789"/>
        <dbReference type="EC" id="2.5.1.6"/>
    </reaction>
</comment>
<comment type="cofactor">
    <cofactor evidence="1">
        <name>Mg(2+)</name>
        <dbReference type="ChEBI" id="CHEBI:18420"/>
    </cofactor>
</comment>
<comment type="pathway">
    <text evidence="1">Amino-acid biosynthesis; S-adenosyl-L-methionine biosynthesis; S-adenosyl-L-methionine from L-methionine: step 1/1.</text>
</comment>
<comment type="similarity">
    <text evidence="1">Belongs to the AdoMet synthase 2 family.</text>
</comment>
<feature type="chain" id="PRO_0000259462" description="S-adenosylmethionine synthase">
    <location>
        <begin position="1"/>
        <end position="400"/>
    </location>
</feature>
<feature type="binding site" evidence="1">
    <location>
        <begin position="137"/>
        <end position="142"/>
    </location>
    <ligand>
        <name>ATP</name>
        <dbReference type="ChEBI" id="CHEBI:30616"/>
    </ligand>
</feature>
<sequence>MTERNIHVQPASGLAVEDQDIEVVERKGIGHPDTICDGIAETVSRALAQTYIDRFGTVLHYNTDETQLVAGTAAPAYGGGEVLEPIYILVVGRATKKFDGERIPAESIALRAARDYLDEQFPHLDLGSDVIVDVQFGEGSGDLQTVFGEEAAIPMANDTSYGVGHAPLTETEQIVRNTEQKLTGEYAESNPVVGQDVKVMGKREGDHIDVTVAVAMVDEHVPDLDAYKTAVSDVRAFVTDLAEEYTDRDVTVHVNTADDYDAESIYLTTTGTSAEQGDDGSVGRGNRANGLITPNRPMSMEATSGKNPVNHIGKIYNLLSTEIAQSVANEVDGIRQVQMRLLSQIGSPIDEPHVADATVVTEDGVAVGDVEADIQATIDDELADVTDITRQVIEGDLSTF</sequence>
<organism>
    <name type="scientific">Haloarcula marismortui (strain ATCC 43049 / DSM 3752 / JCM 8966 / VKM B-1809)</name>
    <name type="common">Halobacterium marismortui</name>
    <dbReference type="NCBI Taxonomy" id="272569"/>
    <lineage>
        <taxon>Archaea</taxon>
        <taxon>Methanobacteriati</taxon>
        <taxon>Methanobacteriota</taxon>
        <taxon>Stenosarchaea group</taxon>
        <taxon>Halobacteria</taxon>
        <taxon>Halobacteriales</taxon>
        <taxon>Haloarculaceae</taxon>
        <taxon>Haloarcula</taxon>
    </lineage>
</organism>
<name>METK_HALMA</name>
<accession>Q5V2S5</accession>